<organism>
    <name type="scientific">Helicobacter pylori (strain ATCC 700392 / 26695)</name>
    <name type="common">Campylobacter pylori</name>
    <dbReference type="NCBI Taxonomy" id="85962"/>
    <lineage>
        <taxon>Bacteria</taxon>
        <taxon>Pseudomonadati</taxon>
        <taxon>Campylobacterota</taxon>
        <taxon>Epsilonproteobacteria</taxon>
        <taxon>Campylobacterales</taxon>
        <taxon>Helicobacteraceae</taxon>
        <taxon>Helicobacter</taxon>
    </lineage>
</organism>
<comment type="catalytic activity">
    <reaction>
        <text>tRNA(Gly) + glycine + ATP = glycyl-tRNA(Gly) + AMP + diphosphate</text>
        <dbReference type="Rhea" id="RHEA:16013"/>
        <dbReference type="Rhea" id="RHEA-COMP:9664"/>
        <dbReference type="Rhea" id="RHEA-COMP:9683"/>
        <dbReference type="ChEBI" id="CHEBI:30616"/>
        <dbReference type="ChEBI" id="CHEBI:33019"/>
        <dbReference type="ChEBI" id="CHEBI:57305"/>
        <dbReference type="ChEBI" id="CHEBI:78442"/>
        <dbReference type="ChEBI" id="CHEBI:78522"/>
        <dbReference type="ChEBI" id="CHEBI:456215"/>
        <dbReference type="EC" id="6.1.1.14"/>
    </reaction>
</comment>
<comment type="subunit">
    <text evidence="1">Tetramer of two alpha and two beta subunits.</text>
</comment>
<comment type="subcellular location">
    <subcellularLocation>
        <location evidence="1">Cytoplasm</location>
    </subcellularLocation>
</comment>
<comment type="similarity">
    <text evidence="2">Belongs to the class-II aminoacyl-tRNA synthetase family.</text>
</comment>
<protein>
    <recommendedName>
        <fullName>Glycine--tRNA ligase alpha subunit</fullName>
        <ecNumber>6.1.1.14</ecNumber>
    </recommendedName>
    <alternativeName>
        <fullName>Glycyl-tRNA synthetase alpha subunit</fullName>
        <shortName>GlyRS</shortName>
    </alternativeName>
</protein>
<keyword id="KW-0030">Aminoacyl-tRNA synthetase</keyword>
<keyword id="KW-0067">ATP-binding</keyword>
<keyword id="KW-0963">Cytoplasm</keyword>
<keyword id="KW-0436">Ligase</keyword>
<keyword id="KW-0547">Nucleotide-binding</keyword>
<keyword id="KW-0648">Protein biosynthesis</keyword>
<keyword id="KW-1185">Reference proteome</keyword>
<dbReference type="EC" id="6.1.1.14"/>
<dbReference type="EMBL" id="AE000511">
    <property type="protein sequence ID" value="AAD08002.1"/>
    <property type="molecule type" value="Genomic_DNA"/>
</dbReference>
<dbReference type="PIR" id="H64639">
    <property type="entry name" value="H64639"/>
</dbReference>
<dbReference type="RefSeq" id="NP_207752.1">
    <property type="nucleotide sequence ID" value="NC_000915.1"/>
</dbReference>
<dbReference type="RefSeq" id="WP_001150920.1">
    <property type="nucleotide sequence ID" value="NC_018939.1"/>
</dbReference>
<dbReference type="SMR" id="P56453"/>
<dbReference type="FunCoup" id="P56453">
    <property type="interactions" value="282"/>
</dbReference>
<dbReference type="IntAct" id="P56453">
    <property type="interactions" value="6"/>
</dbReference>
<dbReference type="STRING" id="85962.HP_0960"/>
<dbReference type="PaxDb" id="85962-C694_04945"/>
<dbReference type="EnsemblBacteria" id="AAD08002">
    <property type="protein sequence ID" value="AAD08002"/>
    <property type="gene ID" value="HP_0960"/>
</dbReference>
<dbReference type="KEGG" id="heo:C694_04945"/>
<dbReference type="KEGG" id="hpy:HP_0960"/>
<dbReference type="PATRIC" id="fig|85962.47.peg.1028"/>
<dbReference type="eggNOG" id="COG0752">
    <property type="taxonomic scope" value="Bacteria"/>
</dbReference>
<dbReference type="InParanoid" id="P56453"/>
<dbReference type="OrthoDB" id="9802183at2"/>
<dbReference type="PhylomeDB" id="P56453"/>
<dbReference type="Proteomes" id="UP000000429">
    <property type="component" value="Chromosome"/>
</dbReference>
<dbReference type="GO" id="GO:0005737">
    <property type="term" value="C:cytoplasm"/>
    <property type="evidence" value="ECO:0007669"/>
    <property type="project" value="UniProtKB-SubCell"/>
</dbReference>
<dbReference type="GO" id="GO:0005524">
    <property type="term" value="F:ATP binding"/>
    <property type="evidence" value="ECO:0007669"/>
    <property type="project" value="UniProtKB-UniRule"/>
</dbReference>
<dbReference type="GO" id="GO:0004820">
    <property type="term" value="F:glycine-tRNA ligase activity"/>
    <property type="evidence" value="ECO:0007669"/>
    <property type="project" value="UniProtKB-UniRule"/>
</dbReference>
<dbReference type="GO" id="GO:0006426">
    <property type="term" value="P:glycyl-tRNA aminoacylation"/>
    <property type="evidence" value="ECO:0007669"/>
    <property type="project" value="UniProtKB-UniRule"/>
</dbReference>
<dbReference type="CDD" id="cd00733">
    <property type="entry name" value="GlyRS_alpha_core"/>
    <property type="match status" value="1"/>
</dbReference>
<dbReference type="FunFam" id="3.30.930.10:FF:000006">
    <property type="entry name" value="Glycine--tRNA ligase alpha subunit"/>
    <property type="match status" value="1"/>
</dbReference>
<dbReference type="Gene3D" id="3.30.930.10">
    <property type="entry name" value="Bira Bifunctional Protein, Domain 2"/>
    <property type="match status" value="1"/>
</dbReference>
<dbReference type="Gene3D" id="1.20.58.180">
    <property type="entry name" value="Class II aaRS and biotin synthetases, domain 2"/>
    <property type="match status" value="1"/>
</dbReference>
<dbReference type="HAMAP" id="MF_00254">
    <property type="entry name" value="Gly_tRNA_synth_alpha"/>
    <property type="match status" value="1"/>
</dbReference>
<dbReference type="InterPro" id="IPR045864">
    <property type="entry name" value="aa-tRNA-synth_II/BPL/LPL"/>
</dbReference>
<dbReference type="InterPro" id="IPR006194">
    <property type="entry name" value="Gly-tRNA-synth_heterodimer"/>
</dbReference>
<dbReference type="InterPro" id="IPR002310">
    <property type="entry name" value="Gly-tRNA_ligase_asu"/>
</dbReference>
<dbReference type="NCBIfam" id="TIGR00388">
    <property type="entry name" value="glyQ"/>
    <property type="match status" value="1"/>
</dbReference>
<dbReference type="NCBIfam" id="NF006827">
    <property type="entry name" value="PRK09348.1"/>
    <property type="match status" value="1"/>
</dbReference>
<dbReference type="PANTHER" id="PTHR30075:SF2">
    <property type="entry name" value="GLYCINE--TRNA LIGASE, CHLOROPLASTIC_MITOCHONDRIAL 2"/>
    <property type="match status" value="1"/>
</dbReference>
<dbReference type="PANTHER" id="PTHR30075">
    <property type="entry name" value="GLYCYL-TRNA SYNTHETASE"/>
    <property type="match status" value="1"/>
</dbReference>
<dbReference type="Pfam" id="PF02091">
    <property type="entry name" value="tRNA-synt_2e"/>
    <property type="match status" value="1"/>
</dbReference>
<dbReference type="PRINTS" id="PR01044">
    <property type="entry name" value="TRNASYNTHGA"/>
</dbReference>
<dbReference type="SUPFAM" id="SSF55681">
    <property type="entry name" value="Class II aaRS and biotin synthetases"/>
    <property type="match status" value="1"/>
</dbReference>
<dbReference type="PROSITE" id="PS50861">
    <property type="entry name" value="AA_TRNA_LIGASE_II_GLYAB"/>
    <property type="match status" value="1"/>
</dbReference>
<name>SYGA_HELPY</name>
<sequence length="303" mass="34936">MQDFSSLLLKLQEYWKNQGCLVIQPYDIPAGAGTFHPATLLRSLDKKPWNVAYVAPSRRPTDGRYGENPNRLGSYYQFQVVIKPSPSNIQELYLKSLEVLGINLNEHDIRFVEDNWESPTLGAWGLGWEVWLDGMEVTQFTYFQQVGGIACSPIPVEITYGLERLAMYVQKVENILEIEWAKKNHDSVNYAQVHLESEYEFSKYHFETASVKRLLEMFKNAQAEALHCLENKLPLPAYDFVMLCSHFFNILDARKAISVAERQNYILQIRDLAKGCALLYKEQEEEREERLKNALTKAENGVS</sequence>
<accession>P56453</accession>
<gene>
    <name type="primary">glyQ</name>
    <name type="ordered locus">HP_0960</name>
</gene>
<feature type="chain" id="PRO_0000072842" description="Glycine--tRNA ligase alpha subunit">
    <location>
        <begin position="1"/>
        <end position="303"/>
    </location>
</feature>
<proteinExistence type="inferred from homology"/>
<reference key="1">
    <citation type="journal article" date="1997" name="Nature">
        <title>The complete genome sequence of the gastric pathogen Helicobacter pylori.</title>
        <authorList>
            <person name="Tomb J.-F."/>
            <person name="White O."/>
            <person name="Kerlavage A.R."/>
            <person name="Clayton R.A."/>
            <person name="Sutton G.G."/>
            <person name="Fleischmann R.D."/>
            <person name="Ketchum K.A."/>
            <person name="Klenk H.-P."/>
            <person name="Gill S.R."/>
            <person name="Dougherty B.A."/>
            <person name="Nelson K.E."/>
            <person name="Quackenbush J."/>
            <person name="Zhou L."/>
            <person name="Kirkness E.F."/>
            <person name="Peterson S.N."/>
            <person name="Loftus B.J."/>
            <person name="Richardson D.L."/>
            <person name="Dodson R.J."/>
            <person name="Khalak H.G."/>
            <person name="Glodek A."/>
            <person name="McKenney K."/>
            <person name="FitzGerald L.M."/>
            <person name="Lee N."/>
            <person name="Adams M.D."/>
            <person name="Hickey E.K."/>
            <person name="Berg D.E."/>
            <person name="Gocayne J.D."/>
            <person name="Utterback T.R."/>
            <person name="Peterson J.D."/>
            <person name="Kelley J.M."/>
            <person name="Cotton M.D."/>
            <person name="Weidman J.F."/>
            <person name="Fujii C."/>
            <person name="Bowman C."/>
            <person name="Watthey L."/>
            <person name="Wallin E."/>
            <person name="Hayes W.S."/>
            <person name="Borodovsky M."/>
            <person name="Karp P.D."/>
            <person name="Smith H.O."/>
            <person name="Fraser C.M."/>
            <person name="Venter J.C."/>
        </authorList>
    </citation>
    <scope>NUCLEOTIDE SEQUENCE [LARGE SCALE GENOMIC DNA]</scope>
    <source>
        <strain>ATCC 700392 / 26695</strain>
    </source>
</reference>
<evidence type="ECO:0000250" key="1"/>
<evidence type="ECO:0000305" key="2"/>